<organism>
    <name type="scientific">Chattonella marina var. antiqua</name>
    <name type="common">Red tide flagellate</name>
    <name type="synonym">Chattonella antiqua</name>
    <dbReference type="NCBI Taxonomy" id="859642"/>
    <lineage>
        <taxon>Eukaryota</taxon>
        <taxon>Sar</taxon>
        <taxon>Stramenopiles</taxon>
        <taxon>Ochrophyta</taxon>
        <taxon>Raphidophyceae</taxon>
        <taxon>Chattonellales</taxon>
        <taxon>Chattonellaceae</taxon>
        <taxon>Chattonella</taxon>
    </lineage>
</organism>
<protein>
    <recommendedName>
        <fullName evidence="5">Glyceraldehyde-3-phosphate dehydrogenase</fullName>
        <shortName evidence="5">GAPH</shortName>
        <ecNumber evidence="2">1.2.1.12</ecNumber>
    </recommendedName>
</protein>
<feature type="chain" id="PRO_0000450207" description="Glyceraldehyde-3-phosphate dehydrogenase">
    <location>
        <begin position="1"/>
        <end position="16" status="greater than"/>
    </location>
</feature>
<feature type="binding site" evidence="1">
    <location>
        <begin position="14"/>
        <end position="15"/>
    </location>
    <ligand>
        <name>NAD(+)</name>
        <dbReference type="ChEBI" id="CHEBI:57540"/>
    </ligand>
</feature>
<feature type="non-terminal residue" evidence="5">
    <location>
        <position position="16"/>
    </location>
</feature>
<keyword id="KW-0963">Cytoplasm</keyword>
<keyword id="KW-0903">Direct protein sequencing</keyword>
<keyword id="KW-0324">Glycolysis</keyword>
<keyword id="KW-0520">NAD</keyword>
<keyword id="KW-0560">Oxidoreductase</keyword>
<comment type="function">
    <text evidence="2">Catalyzes the oxidative phosphorylation of glyceraldehyde 3-phosphate (G3P) to 1,3-bisphosphoglycerate (BPG) using the cofactor NAD.</text>
</comment>
<comment type="catalytic activity">
    <reaction evidence="2">
        <text>D-glyceraldehyde 3-phosphate + phosphate + NAD(+) = (2R)-3-phospho-glyceroyl phosphate + NADH + H(+)</text>
        <dbReference type="Rhea" id="RHEA:10300"/>
        <dbReference type="ChEBI" id="CHEBI:15378"/>
        <dbReference type="ChEBI" id="CHEBI:43474"/>
        <dbReference type="ChEBI" id="CHEBI:57540"/>
        <dbReference type="ChEBI" id="CHEBI:57604"/>
        <dbReference type="ChEBI" id="CHEBI:57945"/>
        <dbReference type="ChEBI" id="CHEBI:59776"/>
        <dbReference type="EC" id="1.2.1.12"/>
    </reaction>
</comment>
<comment type="pathway">
    <text evidence="2">Carbohydrate degradation; glycolysis; pyruvate from D-glyceraldehyde 3-phosphate: step 1/5.</text>
</comment>
<comment type="subunit">
    <text evidence="1">Homotetramer.</text>
</comment>
<comment type="subcellular location">
    <subcellularLocation>
        <location evidence="2">Cytoplasm</location>
    </subcellularLocation>
</comment>
<comment type="induction">
    <text evidence="3 4">Expression shows a diurnal pattern of oscillation across the 24-hour light-dark, with increased levels during the dark period (at protein level) (Ref.2). Up-regulated in the early and late stationary growth phases as compared to the exponential growth phase (PubMed:23291769).</text>
</comment>
<comment type="similarity">
    <text evidence="7">Belongs to the glyceraldehyde-3-phosphate dehydrogenase family.</text>
</comment>
<dbReference type="EC" id="1.2.1.12" evidence="2"/>
<dbReference type="UniPathway" id="UPA00109">
    <property type="reaction ID" value="UER00184"/>
</dbReference>
<dbReference type="GO" id="GO:0005737">
    <property type="term" value="C:cytoplasm"/>
    <property type="evidence" value="ECO:0007669"/>
    <property type="project" value="UniProtKB-SubCell"/>
</dbReference>
<dbReference type="GO" id="GO:0004365">
    <property type="term" value="F:glyceraldehyde-3-phosphate dehydrogenase (NAD+) (phosphorylating) activity"/>
    <property type="evidence" value="ECO:0007669"/>
    <property type="project" value="UniProtKB-EC"/>
</dbReference>
<dbReference type="GO" id="GO:0006096">
    <property type="term" value="P:glycolytic process"/>
    <property type="evidence" value="ECO:0007669"/>
    <property type="project" value="UniProtKB-UniPathway"/>
</dbReference>
<sequence length="16" mass="1576">EGDVIATGINGFGRIG</sequence>
<proteinExistence type="evidence at protein level"/>
<name>G3P_CHAMQ</name>
<evidence type="ECO:0000250" key="1">
    <source>
        <dbReference type="UniProtKB" id="P00362"/>
    </source>
</evidence>
<evidence type="ECO:0000250" key="2">
    <source>
        <dbReference type="UniProtKB" id="P09124"/>
    </source>
</evidence>
<evidence type="ECO:0000269" key="3">
    <source>
    </source>
</evidence>
<evidence type="ECO:0000269" key="4">
    <source ref="2"/>
</evidence>
<evidence type="ECO:0000303" key="5">
    <source>
    </source>
</evidence>
<evidence type="ECO:0000303" key="6">
    <source ref="2"/>
</evidence>
<evidence type="ECO:0000305" key="7"/>
<accession>C0HLQ6</accession>
<reference evidence="7" key="1">
    <citation type="journal article" date="2013" name="Biosci. Biotechnol. Biochem.">
        <title>Growth-phase dependent variation in photosynthetic activity and cellular protein expression profile in the harmful raphidophyte Chattonella antiqua.</title>
        <authorList>
            <person name="Qiu X."/>
            <person name="Shimasaki Y."/>
            <person name="Tsuyama M."/>
            <person name="Yamada T."/>
            <person name="Kuwahara R."/>
            <person name="Kawaguchi M."/>
            <person name="Honda M."/>
            <person name="Gunjikake H."/>
            <person name="Tasmin R."/>
            <person name="Shimizu M."/>
            <person name="Sato Y."/>
            <person name="Kato-Unoki Y."/>
            <person name="Nakashima T."/>
            <person name="Matsubara T."/>
            <person name="Yamasaki Y."/>
            <person name="Ichinose H."/>
            <person name="Wariishi H."/>
            <person name="Honjo T."/>
            <person name="Oshima Y."/>
        </authorList>
    </citation>
    <scope>PROTEIN SEQUENCE</scope>
    <scope>INDUCTION</scope>
    <source>
        <strain evidence="5">NIES-1</strain>
    </source>
</reference>
<reference evidence="7" key="2">
    <citation type="journal article" date="2020" name="J. Exp. Mar. Biol. Ecol.">
        <title>Diurnal variations in expression of photosynthesis-related proteins in the harmful Raphidophyceae Chattonella marina var. antiqua.</title>
        <authorList>
            <person name="Qiu X."/>
            <person name="Mukai K."/>
            <person name="Shimasaki Y."/>
            <person name="Wu M."/>
            <person name="Chen C."/>
            <person name="Lu Y."/>
            <person name="Ichinose H."/>
            <person name="Nakashima T."/>
            <person name="Kato-Unoki Y."/>
            <person name="Oshima Y."/>
        </authorList>
    </citation>
    <scope>PROTEIN SEQUENCE</scope>
    <scope>INDUCTION</scope>
    <source>
        <strain evidence="6">NIES-1</strain>
    </source>
</reference>